<organism>
    <name type="scientific">Cerebratulus lacteus</name>
    <name type="common">Milky ribbon worm</name>
    <name type="synonym">Micrura lactea</name>
    <dbReference type="NCBI Taxonomy" id="6221"/>
    <lineage>
        <taxon>Eukaryota</taxon>
        <taxon>Metazoa</taxon>
        <taxon>Spiralia</taxon>
        <taxon>Lophotrochozoa</taxon>
        <taxon>Nemertea</taxon>
        <taxon>Pilidiophora</taxon>
        <taxon>Heteronemertea</taxon>
        <taxon>Lineidae</taxon>
        <taxon>Cerebratulus</taxon>
    </lineage>
</organism>
<accession>P01526</accession>
<reference key="1">
    <citation type="journal article" date="1981" name="J. Biol. Chem.">
        <title>Structure and action of heteronemertine polypeptide toxins. Amino acid sequence of Cerebratulus lacteus toxin B-II and revised structure of toxin B-IV.</title>
        <authorList>
            <person name="Blumenthal K.M."/>
            <person name="Keim P.S."/>
            <person name="Heinrikson R.L."/>
            <person name="Kem W.R."/>
        </authorList>
    </citation>
    <scope>PROTEIN SEQUENCE</scope>
    <scope>HYDROXYLATION AT PRO-10</scope>
    <scope>DISULFIDE BONDS</scope>
    <scope>SUBCELLULAR LOCATION</scope>
</reference>
<protein>
    <recommendedName>
        <fullName evidence="3">Neurotoxin B-II</fullName>
    </recommendedName>
</protein>
<proteinExistence type="evidence at protein level"/>
<comment type="function">
    <text evidence="1">This toxin increases the excitability of nerves by delaying the inactivation of the voltage-gated sodium channel (Nav). Only acts on some crustacean (By similarity). Neurotoxin B-II is less abundant, but 15-fold more toxic than neurotoxin B-VI.</text>
</comment>
<comment type="subcellular location">
    <subcellularLocation>
        <location evidence="2">Secreted</location>
    </subcellularLocation>
</comment>
<comment type="similarity">
    <text evidence="4">Belongs to the worm B-toxin family.</text>
</comment>
<keyword id="KW-0903">Direct protein sequencing</keyword>
<keyword id="KW-1015">Disulfide bond</keyword>
<keyword id="KW-0379">Hydroxylation</keyword>
<keyword id="KW-0872">Ion channel impairing toxin</keyword>
<keyword id="KW-0528">Neurotoxin</keyword>
<keyword id="KW-0964">Secreted</keyword>
<keyword id="KW-0800">Toxin</keyword>
<keyword id="KW-0738">Voltage-gated sodium channel impairing toxin</keyword>
<sequence length="55" mass="6028">ASSTWGGSYPACENNCRKQYDDCIKCQGKWAGKRGKCAAHCAVQTTSCNDKCKKH</sequence>
<feature type="chain" id="PRO_0000221571" description="Neurotoxin B-II" evidence="2">
    <location>
        <begin position="1"/>
        <end position="55"/>
    </location>
</feature>
<feature type="modified residue" description="Hydroxyproline" evidence="2">
    <location>
        <position position="10"/>
    </location>
</feature>
<feature type="disulfide bond" evidence="2">
    <location>
        <begin position="12"/>
        <end position="48"/>
    </location>
</feature>
<feature type="disulfide bond" evidence="2">
    <location>
        <begin position="16"/>
        <end position="52"/>
    </location>
</feature>
<feature type="disulfide bond" evidence="2">
    <location>
        <begin position="23"/>
        <end position="41"/>
    </location>
</feature>
<feature type="disulfide bond" evidence="2">
    <location>
        <begin position="26"/>
        <end position="37"/>
    </location>
</feature>
<evidence type="ECO:0000250" key="1"/>
<evidence type="ECO:0000269" key="2">
    <source>
    </source>
</evidence>
<evidence type="ECO:0000303" key="3">
    <source>
    </source>
</evidence>
<evidence type="ECO:0000305" key="4"/>
<name>NXB2_CERLA</name>
<dbReference type="PIR" id="A01789">
    <property type="entry name" value="NTHNB2"/>
</dbReference>
<dbReference type="SMR" id="P01526"/>
<dbReference type="GO" id="GO:0005576">
    <property type="term" value="C:extracellular region"/>
    <property type="evidence" value="ECO:0007669"/>
    <property type="project" value="UniProtKB-SubCell"/>
</dbReference>
<dbReference type="GO" id="GO:0019871">
    <property type="term" value="F:sodium channel inhibitor activity"/>
    <property type="evidence" value="ECO:0007669"/>
    <property type="project" value="InterPro"/>
</dbReference>
<dbReference type="GO" id="GO:0090729">
    <property type="term" value="F:toxin activity"/>
    <property type="evidence" value="ECO:0007669"/>
    <property type="project" value="UniProtKB-KW"/>
</dbReference>
<dbReference type="Gene3D" id="1.10.287.120">
    <property type="entry name" value="Neurotoxin B-IV-like"/>
    <property type="match status" value="1"/>
</dbReference>
<dbReference type="InterPro" id="IPR012497">
    <property type="entry name" value="Neurotoxin_B-IV"/>
</dbReference>
<dbReference type="InterPro" id="IPR036586">
    <property type="entry name" value="Neurotoxin_B-IV-like_sf"/>
</dbReference>
<dbReference type="Pfam" id="PF07822">
    <property type="entry name" value="Toxin_13"/>
    <property type="match status" value="1"/>
</dbReference>
<dbReference type="SUPFAM" id="SSF57011">
    <property type="entry name" value="Neurotoxin B-IV"/>
    <property type="match status" value="1"/>
</dbReference>